<proteinExistence type="inferred from homology"/>
<keyword id="KW-1185">Reference proteome</keyword>
<reference key="1">
    <citation type="journal article" date="2004" name="J. Bacteriol.">
        <title>Complete genome sequence of the genetically tractable hydrogenotrophic methanogen Methanococcus maripaludis.</title>
        <authorList>
            <person name="Hendrickson E.L."/>
            <person name="Kaul R."/>
            <person name="Zhou Y."/>
            <person name="Bovee D."/>
            <person name="Chapman P."/>
            <person name="Chung J."/>
            <person name="Conway de Macario E."/>
            <person name="Dodsworth J.A."/>
            <person name="Gillett W."/>
            <person name="Graham D.E."/>
            <person name="Hackett M."/>
            <person name="Haydock A.K."/>
            <person name="Kang A."/>
            <person name="Land M.L."/>
            <person name="Levy R."/>
            <person name="Lie T.J."/>
            <person name="Major T.A."/>
            <person name="Moore B.C."/>
            <person name="Porat I."/>
            <person name="Palmeiri A."/>
            <person name="Rouse G."/>
            <person name="Saenphimmachak C."/>
            <person name="Soell D."/>
            <person name="Van Dien S."/>
            <person name="Wang T."/>
            <person name="Whitman W.B."/>
            <person name="Xia Q."/>
            <person name="Zhang Y."/>
            <person name="Larimer F.W."/>
            <person name="Olson M.V."/>
            <person name="Leigh J.A."/>
        </authorList>
    </citation>
    <scope>NUCLEOTIDE SEQUENCE [LARGE SCALE GENOMIC DNA]</scope>
    <source>
        <strain>DSM 14266 / JCM 13030 / NBRC 101832 / S2 / LL</strain>
    </source>
</reference>
<protein>
    <recommendedName>
        <fullName evidence="1">UPF0285 protein MMP0642</fullName>
    </recommendedName>
</protein>
<sequence>MIVVGIDHGTSGITACVMENKTVKSVFKMKRTEINEKSFLKELEKQVNLNDIDLIGVCYSMGDGIDKITDIKRVENRGVINLEGIGKKIGGGTKVYDEIKSSNIPAIVIPGLHNGVKSMDKRFNALFSHIASPEKISICYNAYKTFGFENFILSDISSNTVTLLIKDGKIFGGFDACVGAVGILHGPIDLELIRNIDADKITANEAFSKAGVVKVTDSYKGVEDTKFEIMNNYDKDEKCKLAVDSLVLSVSMEINSLMFLTPDKNVILAGSIGTWENPNVSKMIKENIDGNVLVLNRESGAIGSAMIAEDILNGKKEILGIPVDF</sequence>
<accession>Q6LZI6</accession>
<name>Y642_METMP</name>
<feature type="chain" id="PRO_1000149874" description="UPF0285 protein MMP0642">
    <location>
        <begin position="1"/>
        <end position="325"/>
    </location>
</feature>
<comment type="similarity">
    <text evidence="1">Belongs to the UPF0285 family.</text>
</comment>
<evidence type="ECO:0000255" key="1">
    <source>
        <dbReference type="HAMAP-Rule" id="MF_01087"/>
    </source>
</evidence>
<organism>
    <name type="scientific">Methanococcus maripaludis (strain DSM 14266 / JCM 13030 / NBRC 101832 / S2 / LL)</name>
    <dbReference type="NCBI Taxonomy" id="267377"/>
    <lineage>
        <taxon>Archaea</taxon>
        <taxon>Methanobacteriati</taxon>
        <taxon>Methanobacteriota</taxon>
        <taxon>Methanomada group</taxon>
        <taxon>Methanococci</taxon>
        <taxon>Methanococcales</taxon>
        <taxon>Methanococcaceae</taxon>
        <taxon>Methanococcus</taxon>
    </lineage>
</organism>
<gene>
    <name type="ordered locus">MMP0642</name>
</gene>
<dbReference type="EMBL" id="BX950229">
    <property type="protein sequence ID" value="CAF30198.1"/>
    <property type="molecule type" value="Genomic_DNA"/>
</dbReference>
<dbReference type="RefSeq" id="WP_011170586.1">
    <property type="nucleotide sequence ID" value="NC_005791.1"/>
</dbReference>
<dbReference type="STRING" id="267377.MMP0642"/>
<dbReference type="DNASU" id="2761078"/>
<dbReference type="EnsemblBacteria" id="CAF30198">
    <property type="protein sequence ID" value="CAF30198"/>
    <property type="gene ID" value="MMP0642"/>
</dbReference>
<dbReference type="GeneID" id="2761078"/>
<dbReference type="KEGG" id="mmp:MMP0642"/>
<dbReference type="PATRIC" id="fig|267377.15.peg.659"/>
<dbReference type="eggNOG" id="arCOG04885">
    <property type="taxonomic scope" value="Archaea"/>
</dbReference>
<dbReference type="HOGENOM" id="CLU_846254_0_0_2"/>
<dbReference type="OrthoDB" id="235676at2157"/>
<dbReference type="Proteomes" id="UP000000590">
    <property type="component" value="Chromosome"/>
</dbReference>
<dbReference type="HAMAP" id="MF_01087">
    <property type="entry name" value="UPF0285"/>
    <property type="match status" value="1"/>
</dbReference>
<dbReference type="InterPro" id="IPR043129">
    <property type="entry name" value="ATPase_NBD"/>
</dbReference>
<dbReference type="InterPro" id="IPR016735">
    <property type="entry name" value="Methan_mark_12"/>
</dbReference>
<dbReference type="NCBIfam" id="TIGR03281">
    <property type="entry name" value="methan_mark_12"/>
    <property type="match status" value="1"/>
</dbReference>
<dbReference type="PIRSF" id="PIRSF018783">
    <property type="entry name" value="UCP018783"/>
    <property type="match status" value="1"/>
</dbReference>
<dbReference type="SUPFAM" id="SSF53067">
    <property type="entry name" value="Actin-like ATPase domain"/>
    <property type="match status" value="1"/>
</dbReference>